<accession>Q8GY42</accession>
<accession>O22734</accession>
<accession>Q8LAF7</accession>
<gene>
    <name type="primary">NAC025</name>
    <name type="synonym">ANAC025</name>
    <name type="synonym">NAC25</name>
    <name type="synonym">TAPNAC</name>
    <name type="ordered locus">At1g61110</name>
    <name type="ORF">F11P17.16</name>
</gene>
<name>NAC25_ARATH</name>
<sequence length="323" mass="36313">MENMGDSSIGPGHPHLPPGFRFHPTDEELVVHYLKKKADSVPLPVSIIAEIDLYKFDPWELPSKASFGEHEWYFFSPRDRKYPNGVRPNRAATSGYWKATGTDKPIFTCNSHKVGVKKALVFYGGKPPKGIKTDWIMHEYRLTDGNLSTAAKPPDLTTTRKNSLRLDDWVLCRIYKKNSSQRPTMERVLLREDLMEGMLSKSSANSSSTSVLDNNDNNNNNNEEHFFDGMVVSSDKRSLCGQYRMGHEASGSSSFGSFLSSKRFHHTGDLNNDNYNVSFVSMLSEIPQSSGFHANGVMDTTSSLADHGVLRQAFQLPNMNWHS</sequence>
<evidence type="ECO:0000255" key="1">
    <source>
        <dbReference type="PROSITE-ProRule" id="PRU00353"/>
    </source>
</evidence>
<evidence type="ECO:0000256" key="2">
    <source>
        <dbReference type="SAM" id="MobiDB-lite"/>
    </source>
</evidence>
<evidence type="ECO:0000269" key="3">
    <source>
    </source>
</evidence>
<evidence type="ECO:0000269" key="4">
    <source>
    </source>
</evidence>
<evidence type="ECO:0000305" key="5"/>
<evidence type="ECO:0000305" key="6">
    <source>
    </source>
</evidence>
<feature type="chain" id="PRO_0000420370" description="NAC transcription factor 25">
    <location>
        <begin position="1"/>
        <end position="323"/>
    </location>
</feature>
<feature type="domain" description="NAC" evidence="1">
    <location>
        <begin position="16"/>
        <end position="177"/>
    </location>
</feature>
<feature type="DNA-binding region" evidence="1">
    <location>
        <begin position="114"/>
        <end position="183"/>
    </location>
</feature>
<feature type="region of interest" description="Disordered" evidence="2">
    <location>
        <begin position="201"/>
        <end position="223"/>
    </location>
</feature>
<feature type="compositionally biased region" description="Low complexity" evidence="2">
    <location>
        <begin position="201"/>
        <end position="221"/>
    </location>
</feature>
<feature type="sequence conflict" description="In Ref. 4; AAM65392." evidence="5" ref="4">
    <original>D</original>
    <variation>A</variation>
    <location>
        <position position="39"/>
    </location>
</feature>
<feature type="sequence conflict" description="In Ref. 4; AAM65392." evidence="5" ref="4">
    <original>E</original>
    <variation>K</variation>
    <location>
        <position position="223"/>
    </location>
</feature>
<feature type="sequence conflict" description="In Ref. 4; AAM65392." evidence="5" ref="4">
    <original>H</original>
    <variation>D</variation>
    <location>
        <position position="247"/>
    </location>
</feature>
<proteinExistence type="evidence at transcript level"/>
<comment type="function">
    <text evidence="3 6">Transcription factor of the NAC family. May be associated with anther development and pollen production (Probable). Required for normal seed development and morphology (PubMed:18849494).</text>
</comment>
<comment type="subcellular location">
    <subcellularLocation>
        <location evidence="1">Nucleus</location>
    </subcellularLocation>
</comment>
<comment type="tissue specificity">
    <text evidence="4">Expressed specifically in the tapetum.</text>
</comment>
<comment type="developmental stage">
    <text evidence="4">Expressed during pollen development and maturation.</text>
</comment>
<comment type="domain">
    <text evidence="1">The NAC domain includes a DNA-binding domain and a dimerization domain.</text>
</comment>
<comment type="miscellaneous">
    <text evidence="3">Plants silencing NAC025 produce abnormally shaped seeds.</text>
</comment>
<comment type="sequence caution" evidence="5">
    <conflict type="erroneous gene model prediction">
        <sequence resource="EMBL-CDS" id="AAB71483"/>
    </conflict>
</comment>
<comment type="sequence caution" evidence="5">
    <conflict type="erroneous initiation">
        <sequence resource="EMBL-CDS" id="AAB71483"/>
    </conflict>
    <text>Truncated N-terminus.</text>
</comment>
<organism>
    <name type="scientific">Arabidopsis thaliana</name>
    <name type="common">Mouse-ear cress</name>
    <dbReference type="NCBI Taxonomy" id="3702"/>
    <lineage>
        <taxon>Eukaryota</taxon>
        <taxon>Viridiplantae</taxon>
        <taxon>Streptophyta</taxon>
        <taxon>Embryophyta</taxon>
        <taxon>Tracheophyta</taxon>
        <taxon>Spermatophyta</taxon>
        <taxon>Magnoliopsida</taxon>
        <taxon>eudicotyledons</taxon>
        <taxon>Gunneridae</taxon>
        <taxon>Pentapetalae</taxon>
        <taxon>rosids</taxon>
        <taxon>malvids</taxon>
        <taxon>Brassicales</taxon>
        <taxon>Brassicaceae</taxon>
        <taxon>Camelineae</taxon>
        <taxon>Arabidopsis</taxon>
    </lineage>
</organism>
<reference key="1">
    <citation type="journal article" date="2000" name="Nature">
        <title>Sequence and analysis of chromosome 1 of the plant Arabidopsis thaliana.</title>
        <authorList>
            <person name="Theologis A."/>
            <person name="Ecker J.R."/>
            <person name="Palm C.J."/>
            <person name="Federspiel N.A."/>
            <person name="Kaul S."/>
            <person name="White O."/>
            <person name="Alonso J."/>
            <person name="Altafi H."/>
            <person name="Araujo R."/>
            <person name="Bowman C.L."/>
            <person name="Brooks S.Y."/>
            <person name="Buehler E."/>
            <person name="Chan A."/>
            <person name="Chao Q."/>
            <person name="Chen H."/>
            <person name="Cheuk R.F."/>
            <person name="Chin C.W."/>
            <person name="Chung M.K."/>
            <person name="Conn L."/>
            <person name="Conway A.B."/>
            <person name="Conway A.R."/>
            <person name="Creasy T.H."/>
            <person name="Dewar K."/>
            <person name="Dunn P."/>
            <person name="Etgu P."/>
            <person name="Feldblyum T.V."/>
            <person name="Feng J.-D."/>
            <person name="Fong B."/>
            <person name="Fujii C.Y."/>
            <person name="Gill J.E."/>
            <person name="Goldsmith A.D."/>
            <person name="Haas B."/>
            <person name="Hansen N.F."/>
            <person name="Hughes B."/>
            <person name="Huizar L."/>
            <person name="Hunter J.L."/>
            <person name="Jenkins J."/>
            <person name="Johnson-Hopson C."/>
            <person name="Khan S."/>
            <person name="Khaykin E."/>
            <person name="Kim C.J."/>
            <person name="Koo H.L."/>
            <person name="Kremenetskaia I."/>
            <person name="Kurtz D.B."/>
            <person name="Kwan A."/>
            <person name="Lam B."/>
            <person name="Langin-Hooper S."/>
            <person name="Lee A."/>
            <person name="Lee J.M."/>
            <person name="Lenz C.A."/>
            <person name="Li J.H."/>
            <person name="Li Y.-P."/>
            <person name="Lin X."/>
            <person name="Liu S.X."/>
            <person name="Liu Z.A."/>
            <person name="Luros J.S."/>
            <person name="Maiti R."/>
            <person name="Marziali A."/>
            <person name="Militscher J."/>
            <person name="Miranda M."/>
            <person name="Nguyen M."/>
            <person name="Nierman W.C."/>
            <person name="Osborne B.I."/>
            <person name="Pai G."/>
            <person name="Peterson J."/>
            <person name="Pham P.K."/>
            <person name="Rizzo M."/>
            <person name="Rooney T."/>
            <person name="Rowley D."/>
            <person name="Sakano H."/>
            <person name="Salzberg S.L."/>
            <person name="Schwartz J.R."/>
            <person name="Shinn P."/>
            <person name="Southwick A.M."/>
            <person name="Sun H."/>
            <person name="Tallon L.J."/>
            <person name="Tambunga G."/>
            <person name="Toriumi M.J."/>
            <person name="Town C.D."/>
            <person name="Utterback T."/>
            <person name="Van Aken S."/>
            <person name="Vaysberg M."/>
            <person name="Vysotskaia V.S."/>
            <person name="Walker M."/>
            <person name="Wu D."/>
            <person name="Yu G."/>
            <person name="Fraser C.M."/>
            <person name="Venter J.C."/>
            <person name="Davis R.W."/>
        </authorList>
    </citation>
    <scope>NUCLEOTIDE SEQUENCE [LARGE SCALE GENOMIC DNA]</scope>
    <source>
        <strain>cv. Columbia</strain>
    </source>
</reference>
<reference key="2">
    <citation type="journal article" date="2017" name="Plant J.">
        <title>Araport11: a complete reannotation of the Arabidopsis thaliana reference genome.</title>
        <authorList>
            <person name="Cheng C.Y."/>
            <person name="Krishnakumar V."/>
            <person name="Chan A.P."/>
            <person name="Thibaud-Nissen F."/>
            <person name="Schobel S."/>
            <person name="Town C.D."/>
        </authorList>
    </citation>
    <scope>GENOME REANNOTATION</scope>
    <source>
        <strain>cv. Columbia</strain>
    </source>
</reference>
<reference key="3">
    <citation type="journal article" date="2002" name="Science">
        <title>Functional annotation of a full-length Arabidopsis cDNA collection.</title>
        <authorList>
            <person name="Seki M."/>
            <person name="Narusaka M."/>
            <person name="Kamiya A."/>
            <person name="Ishida J."/>
            <person name="Satou M."/>
            <person name="Sakurai T."/>
            <person name="Nakajima M."/>
            <person name="Enju A."/>
            <person name="Akiyama K."/>
            <person name="Oono Y."/>
            <person name="Muramatsu M."/>
            <person name="Hayashizaki Y."/>
            <person name="Kawai J."/>
            <person name="Carninci P."/>
            <person name="Itoh M."/>
            <person name="Ishii Y."/>
            <person name="Arakawa T."/>
            <person name="Shibata K."/>
            <person name="Shinagawa A."/>
            <person name="Shinozaki K."/>
        </authorList>
    </citation>
    <scope>NUCLEOTIDE SEQUENCE [LARGE SCALE MRNA]</scope>
    <source>
        <strain>cv. Columbia</strain>
    </source>
</reference>
<reference key="4">
    <citation type="submission" date="2002-03" db="EMBL/GenBank/DDBJ databases">
        <title>Full-length cDNA from Arabidopsis thaliana.</title>
        <authorList>
            <person name="Brover V.V."/>
            <person name="Troukhan M.E."/>
            <person name="Alexandrov N.A."/>
            <person name="Lu Y.-P."/>
            <person name="Flavell R.B."/>
            <person name="Feldmann K.A."/>
        </authorList>
    </citation>
    <scope>NUCLEOTIDE SEQUENCE [LARGE SCALE MRNA]</scope>
</reference>
<reference key="5">
    <citation type="journal article" date="2003" name="Science">
        <title>Empirical analysis of transcriptional activity in the Arabidopsis genome.</title>
        <authorList>
            <person name="Yamada K."/>
            <person name="Lim J."/>
            <person name="Dale J.M."/>
            <person name="Chen H."/>
            <person name="Shinn P."/>
            <person name="Palm C.J."/>
            <person name="Southwick A.M."/>
            <person name="Wu H.C."/>
            <person name="Kim C.J."/>
            <person name="Nguyen M."/>
            <person name="Pham P.K."/>
            <person name="Cheuk R.F."/>
            <person name="Karlin-Newmann G."/>
            <person name="Liu S.X."/>
            <person name="Lam B."/>
            <person name="Sakano H."/>
            <person name="Wu T."/>
            <person name="Yu G."/>
            <person name="Miranda M."/>
            <person name="Quach H.L."/>
            <person name="Tripp M."/>
            <person name="Chang C.H."/>
            <person name="Lee J.M."/>
            <person name="Toriumi M.J."/>
            <person name="Chan M.M."/>
            <person name="Tang C.C."/>
            <person name="Onodera C.S."/>
            <person name="Deng J.M."/>
            <person name="Akiyama K."/>
            <person name="Ansari Y."/>
            <person name="Arakawa T."/>
            <person name="Banh J."/>
            <person name="Banno F."/>
            <person name="Bowser L."/>
            <person name="Brooks S.Y."/>
            <person name="Carninci P."/>
            <person name="Chao Q."/>
            <person name="Choy N."/>
            <person name="Enju A."/>
            <person name="Goldsmith A.D."/>
            <person name="Gurjal M."/>
            <person name="Hansen N.F."/>
            <person name="Hayashizaki Y."/>
            <person name="Johnson-Hopson C."/>
            <person name="Hsuan V.W."/>
            <person name="Iida K."/>
            <person name="Karnes M."/>
            <person name="Khan S."/>
            <person name="Koesema E."/>
            <person name="Ishida J."/>
            <person name="Jiang P.X."/>
            <person name="Jones T."/>
            <person name="Kawai J."/>
            <person name="Kamiya A."/>
            <person name="Meyers C."/>
            <person name="Nakajima M."/>
            <person name="Narusaka M."/>
            <person name="Seki M."/>
            <person name="Sakurai T."/>
            <person name="Satou M."/>
            <person name="Tamse R."/>
            <person name="Vaysberg M."/>
            <person name="Wallender E.K."/>
            <person name="Wong C."/>
            <person name="Yamamura Y."/>
            <person name="Yuan S."/>
            <person name="Shinozaki K."/>
            <person name="Davis R.W."/>
            <person name="Theologis A."/>
            <person name="Ecker J.R."/>
        </authorList>
    </citation>
    <scope>NUCLEOTIDE SEQUENCE [LARGE SCALE MRNA]</scope>
    <source>
        <strain>cv. Columbia</strain>
    </source>
</reference>
<reference key="6">
    <citation type="journal article" date="2008" name="Plant Cell">
        <title>NAC family proteins NARS1/NAC2 and NARS2/NAM in the outer integument regulate embryogenesis in Arabidopsis.</title>
        <authorList>
            <person name="Kunieda T."/>
            <person name="Mitsuda N."/>
            <person name="Ohme-Takagi M."/>
            <person name="Takeda S."/>
            <person name="Aida M."/>
            <person name="Tasaka M."/>
            <person name="Kondo M."/>
            <person name="Nishimura M."/>
            <person name="Hara-Nishimura I."/>
        </authorList>
    </citation>
    <scope>FUNCTION</scope>
</reference>
<reference key="7">
    <citation type="journal article" date="2011" name="Plant Mol. Biol.">
        <title>A cis regulatory element in the TAPNAC promoter directs tapetal gene expression.</title>
        <authorList>
            <person name="Alvarado V.Y."/>
            <person name="Tag A."/>
            <person name="Thomas T.L."/>
        </authorList>
    </citation>
    <scope>TISSUE SPECIFICITY</scope>
    <scope>DEVELOPMENTAL STAGE</scope>
</reference>
<protein>
    <recommendedName>
        <fullName>NAC transcription factor 25</fullName>
        <shortName>AtNAC025</shortName>
    </recommendedName>
</protein>
<keyword id="KW-0238">DNA-binding</keyword>
<keyword id="KW-0539">Nucleus</keyword>
<keyword id="KW-1185">Reference proteome</keyword>
<keyword id="KW-0804">Transcription</keyword>
<keyword id="KW-0805">Transcription regulation</keyword>
<dbReference type="EMBL" id="AC002294">
    <property type="protein sequence ID" value="AAB71483.1"/>
    <property type="status" value="ALT_SEQ"/>
    <property type="molecule type" value="Genomic_DNA"/>
</dbReference>
<dbReference type="EMBL" id="CP002684">
    <property type="protein sequence ID" value="AEE33783.1"/>
    <property type="molecule type" value="Genomic_DNA"/>
</dbReference>
<dbReference type="EMBL" id="AK117878">
    <property type="protein sequence ID" value="BAC42518.1"/>
    <property type="molecule type" value="mRNA"/>
</dbReference>
<dbReference type="EMBL" id="AY087839">
    <property type="protein sequence ID" value="AAM65392.1"/>
    <property type="molecule type" value="mRNA"/>
</dbReference>
<dbReference type="EMBL" id="BT008346">
    <property type="protein sequence ID" value="AAP37705.1"/>
    <property type="molecule type" value="mRNA"/>
</dbReference>
<dbReference type="PIR" id="H96636">
    <property type="entry name" value="H96636"/>
</dbReference>
<dbReference type="RefSeq" id="NP_564771.1">
    <property type="nucleotide sequence ID" value="NM_104792.3"/>
</dbReference>
<dbReference type="SMR" id="Q8GY42"/>
<dbReference type="STRING" id="3702.Q8GY42"/>
<dbReference type="PaxDb" id="3702-AT1G61110.1"/>
<dbReference type="EnsemblPlants" id="AT1G61110.1">
    <property type="protein sequence ID" value="AT1G61110.1"/>
    <property type="gene ID" value="AT1G61110"/>
</dbReference>
<dbReference type="GeneID" id="842404"/>
<dbReference type="Gramene" id="AT1G61110.1">
    <property type="protein sequence ID" value="AT1G61110.1"/>
    <property type="gene ID" value="AT1G61110"/>
</dbReference>
<dbReference type="KEGG" id="ath:AT1G61110"/>
<dbReference type="Araport" id="AT1G61110"/>
<dbReference type="TAIR" id="AT1G61110">
    <property type="gene designation" value="NAC025"/>
</dbReference>
<dbReference type="eggNOG" id="ENOG502QRBC">
    <property type="taxonomic scope" value="Eukaryota"/>
</dbReference>
<dbReference type="HOGENOM" id="CLU_035664_8_1_1"/>
<dbReference type="InParanoid" id="Q8GY42"/>
<dbReference type="OMA" id="ENMGDSS"/>
<dbReference type="PhylomeDB" id="Q8GY42"/>
<dbReference type="PRO" id="PR:Q8GY42"/>
<dbReference type="Proteomes" id="UP000006548">
    <property type="component" value="Chromosome 1"/>
</dbReference>
<dbReference type="ExpressionAtlas" id="Q8GY42">
    <property type="expression patterns" value="baseline and differential"/>
</dbReference>
<dbReference type="GO" id="GO:0005634">
    <property type="term" value="C:nucleus"/>
    <property type="evidence" value="ECO:0007669"/>
    <property type="project" value="UniProtKB-SubCell"/>
</dbReference>
<dbReference type="GO" id="GO:0003700">
    <property type="term" value="F:DNA-binding transcription factor activity"/>
    <property type="evidence" value="ECO:0000250"/>
    <property type="project" value="TAIR"/>
</dbReference>
<dbReference type="GO" id="GO:0043565">
    <property type="term" value="F:sequence-specific DNA binding"/>
    <property type="evidence" value="ECO:0000314"/>
    <property type="project" value="TAIR"/>
</dbReference>
<dbReference type="GO" id="GO:0009793">
    <property type="term" value="P:embryo development ending in seed dormancy"/>
    <property type="evidence" value="ECO:0000315"/>
    <property type="project" value="UniProtKB"/>
</dbReference>
<dbReference type="GO" id="GO:0009831">
    <property type="term" value="P:plant-type cell wall modification involved in multidimensional cell growth"/>
    <property type="evidence" value="ECO:0000315"/>
    <property type="project" value="TAIR"/>
</dbReference>
<dbReference type="GO" id="GO:0010628">
    <property type="term" value="P:positive regulation of gene expression"/>
    <property type="evidence" value="ECO:0000314"/>
    <property type="project" value="TAIR"/>
</dbReference>
<dbReference type="FunFam" id="2.170.150.80:FF:000005">
    <property type="entry name" value="NAC transcription factor 56"/>
    <property type="match status" value="1"/>
</dbReference>
<dbReference type="Gene3D" id="2.170.150.80">
    <property type="entry name" value="NAC domain"/>
    <property type="match status" value="1"/>
</dbReference>
<dbReference type="InterPro" id="IPR003441">
    <property type="entry name" value="NAC-dom"/>
</dbReference>
<dbReference type="InterPro" id="IPR036093">
    <property type="entry name" value="NAC_dom_sf"/>
</dbReference>
<dbReference type="PANTHER" id="PTHR31719:SF148">
    <property type="entry name" value="NAC TRANSCRIPTION FACTOR 25"/>
    <property type="match status" value="1"/>
</dbReference>
<dbReference type="PANTHER" id="PTHR31719">
    <property type="entry name" value="NAC TRANSCRIPTION FACTOR 56"/>
    <property type="match status" value="1"/>
</dbReference>
<dbReference type="Pfam" id="PF02365">
    <property type="entry name" value="NAM"/>
    <property type="match status" value="1"/>
</dbReference>
<dbReference type="SUPFAM" id="SSF101941">
    <property type="entry name" value="NAC domain"/>
    <property type="match status" value="1"/>
</dbReference>
<dbReference type="PROSITE" id="PS51005">
    <property type="entry name" value="NAC"/>
    <property type="match status" value="1"/>
</dbReference>